<evidence type="ECO:0000250" key="1"/>
<evidence type="ECO:0000250" key="2">
    <source>
        <dbReference type="UniProtKB" id="Q8NEJ9"/>
    </source>
</evidence>
<evidence type="ECO:0000255" key="3"/>
<evidence type="ECO:0000256" key="4">
    <source>
        <dbReference type="SAM" id="MobiDB-lite"/>
    </source>
</evidence>
<evidence type="ECO:0000269" key="5">
    <source>
    </source>
</evidence>
<evidence type="ECO:0000305" key="6"/>
<sequence>MAAPEVLESDVSSSITLLKNLQEQVMAVTAQIQALTTKVRAGTYSTEKGLSFLEVKDQLLLMYLMDLSHLILDKASGASLQGHPAVLRLVEIRTVLEKLRPLDQKLKYQIDKLVKTAVTGSLSENDPLRFKPHPSNMVSKLSSEDEEESEAEEGQSEASGKKSAKGSAKKYVPPRLVPVHYDETEAEREQKRLEKAKRRALSSSVIRELKEQYSDAPEEIRDARHPHVTRQSQEDQHRVNYEESMMVRLSVSKREKGLRRRASAMSSQLHSLTHFSDISALTGGTAHLDEDQNPVKKRKKLPKKGRKKKGFRRRW</sequence>
<name>NGDN_MOUSE</name>
<accession>Q9DB96</accession>
<accession>Q8CIJ2</accession>
<gene>
    <name type="primary">Ngdn</name>
    <name type="synonym">Ngd</name>
</gene>
<proteinExistence type="evidence at protein level"/>
<organism>
    <name type="scientific">Mus musculus</name>
    <name type="common">Mouse</name>
    <dbReference type="NCBI Taxonomy" id="10090"/>
    <lineage>
        <taxon>Eukaryota</taxon>
        <taxon>Metazoa</taxon>
        <taxon>Chordata</taxon>
        <taxon>Craniata</taxon>
        <taxon>Vertebrata</taxon>
        <taxon>Euteleostomi</taxon>
        <taxon>Mammalia</taxon>
        <taxon>Eutheria</taxon>
        <taxon>Euarchontoglires</taxon>
        <taxon>Glires</taxon>
        <taxon>Rodentia</taxon>
        <taxon>Myomorpha</taxon>
        <taxon>Muroidea</taxon>
        <taxon>Muridae</taxon>
        <taxon>Murinae</taxon>
        <taxon>Mus</taxon>
        <taxon>Mus</taxon>
    </lineage>
</organism>
<comment type="function">
    <text evidence="2 5">Part of the small subunit (SSU) processome, first precursor of the small eukaryotic ribosomal subunit. During the assembly of the SSU processome in the nucleolus, many ribosome biogenesis factors, an RNA chaperone and ribosomal proteins associate with the nascent pre-rRNA and work in concert to generate RNA folding, modifications, rearrangements and cleavage as well as targeted degradation of pre-ribosomal RNA by the RNA exosome. Its dissociation from the complex determines the transition from state pre-A1 to state pre-A1* (By similarity). Inhibits mRNA translation in a cytoplasmic polyadenylation element (CPE)-dependent manner (PubMed:16705177).</text>
</comment>
<comment type="subunit">
    <text evidence="5">Interacts with CPEB1 and EIF4E.</text>
</comment>
<comment type="subcellular location">
    <subcellularLocation>
        <location evidence="5">Nucleus</location>
    </subcellularLocation>
    <subcellularLocation>
        <location evidence="2">Nucleus</location>
        <location evidence="2">Nucleolus</location>
    </subcellularLocation>
    <subcellularLocation>
        <location evidence="2">Chromosome</location>
        <location evidence="2">Centromere</location>
    </subcellularLocation>
    <subcellularLocation>
        <location evidence="5">Cytoplasm</location>
    </subcellularLocation>
    <subcellularLocation>
        <location evidence="5">Cell projection</location>
        <location evidence="5">Axon</location>
    </subcellularLocation>
    <subcellularLocation>
        <location evidence="5">Cell projection</location>
        <location evidence="5">Dendrite</location>
    </subcellularLocation>
    <subcellularLocation>
        <location evidence="5">Cell projection</location>
        <location evidence="5">Filopodium</location>
    </subcellularLocation>
    <text evidence="1">Translocated from nucleolus to nuclear foci in response to UV damage (By similarity). Detected in axons, dendrites and filopodia. Colocalized with EIF4E in neurites.</text>
</comment>
<comment type="tissue specificity">
    <text evidence="5">Expressed in testis, ovary, spleen, kidney, hippocampus and cerebellum (at protein level). Expressed in testis, ovary, spleen, kidney, brain.</text>
</comment>
<comment type="similarity">
    <text evidence="6">Belongs to the SAS10 family.</text>
</comment>
<comment type="sequence caution" evidence="6">
    <conflict type="erroneous initiation">
        <sequence resource="EMBL-CDS" id="AAH23770"/>
    </conflict>
    <text>Extended N-terminus.</text>
</comment>
<reference key="1">
    <citation type="journal article" date="2005" name="Science">
        <title>The transcriptional landscape of the mammalian genome.</title>
        <authorList>
            <person name="Carninci P."/>
            <person name="Kasukawa T."/>
            <person name="Katayama S."/>
            <person name="Gough J."/>
            <person name="Frith M.C."/>
            <person name="Maeda N."/>
            <person name="Oyama R."/>
            <person name="Ravasi T."/>
            <person name="Lenhard B."/>
            <person name="Wells C."/>
            <person name="Kodzius R."/>
            <person name="Shimokawa K."/>
            <person name="Bajic V.B."/>
            <person name="Brenner S.E."/>
            <person name="Batalov S."/>
            <person name="Forrest A.R."/>
            <person name="Zavolan M."/>
            <person name="Davis M.J."/>
            <person name="Wilming L.G."/>
            <person name="Aidinis V."/>
            <person name="Allen J.E."/>
            <person name="Ambesi-Impiombato A."/>
            <person name="Apweiler R."/>
            <person name="Aturaliya R.N."/>
            <person name="Bailey T.L."/>
            <person name="Bansal M."/>
            <person name="Baxter L."/>
            <person name="Beisel K.W."/>
            <person name="Bersano T."/>
            <person name="Bono H."/>
            <person name="Chalk A.M."/>
            <person name="Chiu K.P."/>
            <person name="Choudhary V."/>
            <person name="Christoffels A."/>
            <person name="Clutterbuck D.R."/>
            <person name="Crowe M.L."/>
            <person name="Dalla E."/>
            <person name="Dalrymple B.P."/>
            <person name="de Bono B."/>
            <person name="Della Gatta G."/>
            <person name="di Bernardo D."/>
            <person name="Down T."/>
            <person name="Engstrom P."/>
            <person name="Fagiolini M."/>
            <person name="Faulkner G."/>
            <person name="Fletcher C.F."/>
            <person name="Fukushima T."/>
            <person name="Furuno M."/>
            <person name="Futaki S."/>
            <person name="Gariboldi M."/>
            <person name="Georgii-Hemming P."/>
            <person name="Gingeras T.R."/>
            <person name="Gojobori T."/>
            <person name="Green R.E."/>
            <person name="Gustincich S."/>
            <person name="Harbers M."/>
            <person name="Hayashi Y."/>
            <person name="Hensch T.K."/>
            <person name="Hirokawa N."/>
            <person name="Hill D."/>
            <person name="Huminiecki L."/>
            <person name="Iacono M."/>
            <person name="Ikeo K."/>
            <person name="Iwama A."/>
            <person name="Ishikawa T."/>
            <person name="Jakt M."/>
            <person name="Kanapin A."/>
            <person name="Katoh M."/>
            <person name="Kawasawa Y."/>
            <person name="Kelso J."/>
            <person name="Kitamura H."/>
            <person name="Kitano H."/>
            <person name="Kollias G."/>
            <person name="Krishnan S.P."/>
            <person name="Kruger A."/>
            <person name="Kummerfeld S.K."/>
            <person name="Kurochkin I.V."/>
            <person name="Lareau L.F."/>
            <person name="Lazarevic D."/>
            <person name="Lipovich L."/>
            <person name="Liu J."/>
            <person name="Liuni S."/>
            <person name="McWilliam S."/>
            <person name="Madan Babu M."/>
            <person name="Madera M."/>
            <person name="Marchionni L."/>
            <person name="Matsuda H."/>
            <person name="Matsuzawa S."/>
            <person name="Miki H."/>
            <person name="Mignone F."/>
            <person name="Miyake S."/>
            <person name="Morris K."/>
            <person name="Mottagui-Tabar S."/>
            <person name="Mulder N."/>
            <person name="Nakano N."/>
            <person name="Nakauchi H."/>
            <person name="Ng P."/>
            <person name="Nilsson R."/>
            <person name="Nishiguchi S."/>
            <person name="Nishikawa S."/>
            <person name="Nori F."/>
            <person name="Ohara O."/>
            <person name="Okazaki Y."/>
            <person name="Orlando V."/>
            <person name="Pang K.C."/>
            <person name="Pavan W.J."/>
            <person name="Pavesi G."/>
            <person name="Pesole G."/>
            <person name="Petrovsky N."/>
            <person name="Piazza S."/>
            <person name="Reed J."/>
            <person name="Reid J.F."/>
            <person name="Ring B.Z."/>
            <person name="Ringwald M."/>
            <person name="Rost B."/>
            <person name="Ruan Y."/>
            <person name="Salzberg S.L."/>
            <person name="Sandelin A."/>
            <person name="Schneider C."/>
            <person name="Schoenbach C."/>
            <person name="Sekiguchi K."/>
            <person name="Semple C.A."/>
            <person name="Seno S."/>
            <person name="Sessa L."/>
            <person name="Sheng Y."/>
            <person name="Shibata Y."/>
            <person name="Shimada H."/>
            <person name="Shimada K."/>
            <person name="Silva D."/>
            <person name="Sinclair B."/>
            <person name="Sperling S."/>
            <person name="Stupka E."/>
            <person name="Sugiura K."/>
            <person name="Sultana R."/>
            <person name="Takenaka Y."/>
            <person name="Taki K."/>
            <person name="Tammoja K."/>
            <person name="Tan S.L."/>
            <person name="Tang S."/>
            <person name="Taylor M.S."/>
            <person name="Tegner J."/>
            <person name="Teichmann S.A."/>
            <person name="Ueda H.R."/>
            <person name="van Nimwegen E."/>
            <person name="Verardo R."/>
            <person name="Wei C.L."/>
            <person name="Yagi K."/>
            <person name="Yamanishi H."/>
            <person name="Zabarovsky E."/>
            <person name="Zhu S."/>
            <person name="Zimmer A."/>
            <person name="Hide W."/>
            <person name="Bult C."/>
            <person name="Grimmond S.M."/>
            <person name="Teasdale R.D."/>
            <person name="Liu E.T."/>
            <person name="Brusic V."/>
            <person name="Quackenbush J."/>
            <person name="Wahlestedt C."/>
            <person name="Mattick J.S."/>
            <person name="Hume D.A."/>
            <person name="Kai C."/>
            <person name="Sasaki D."/>
            <person name="Tomaru Y."/>
            <person name="Fukuda S."/>
            <person name="Kanamori-Katayama M."/>
            <person name="Suzuki M."/>
            <person name="Aoki J."/>
            <person name="Arakawa T."/>
            <person name="Iida J."/>
            <person name="Imamura K."/>
            <person name="Itoh M."/>
            <person name="Kato T."/>
            <person name="Kawaji H."/>
            <person name="Kawagashira N."/>
            <person name="Kawashima T."/>
            <person name="Kojima M."/>
            <person name="Kondo S."/>
            <person name="Konno H."/>
            <person name="Nakano K."/>
            <person name="Ninomiya N."/>
            <person name="Nishio T."/>
            <person name="Okada M."/>
            <person name="Plessy C."/>
            <person name="Shibata K."/>
            <person name="Shiraki T."/>
            <person name="Suzuki S."/>
            <person name="Tagami M."/>
            <person name="Waki K."/>
            <person name="Watahiki A."/>
            <person name="Okamura-Oho Y."/>
            <person name="Suzuki H."/>
            <person name="Kawai J."/>
            <person name="Hayashizaki Y."/>
        </authorList>
    </citation>
    <scope>NUCLEOTIDE SEQUENCE [LARGE SCALE MRNA]</scope>
    <source>
        <strain>C57BL/6J</strain>
        <tissue>Cerebellum</tissue>
    </source>
</reference>
<reference key="2">
    <citation type="journal article" date="2004" name="Genome Res.">
        <title>The status, quality, and expansion of the NIH full-length cDNA project: the Mammalian Gene Collection (MGC).</title>
        <authorList>
            <consortium name="The MGC Project Team"/>
        </authorList>
    </citation>
    <scope>NUCLEOTIDE SEQUENCE [LARGE SCALE MRNA]</scope>
    <source>
        <strain>FVB/N</strain>
        <tissue>Mammary gland</tissue>
        <tissue>Mammary tumor</tissue>
    </source>
</reference>
<reference key="3">
    <citation type="journal article" date="2006" name="Mol. Cell. Biol.">
        <title>Translational control by neuroguidin, a eukaryotic initiation factor 4E and CPEB binding protein.</title>
        <authorList>
            <person name="Jung M.-Y."/>
            <person name="Lorenz L."/>
            <person name="Richter J.D."/>
        </authorList>
    </citation>
    <scope>FUNCTION</scope>
    <scope>INTERACTION WITH CPEB1 AND EIF4E</scope>
    <scope>SUBCELLULAR LOCATION</scope>
    <scope>TISSUE SPECIFICITY</scope>
</reference>
<keyword id="KW-0007">Acetylation</keyword>
<keyword id="KW-0966">Cell projection</keyword>
<keyword id="KW-0137">Centromere</keyword>
<keyword id="KW-0158">Chromosome</keyword>
<keyword id="KW-0175">Coiled coil</keyword>
<keyword id="KW-0963">Cytoplasm</keyword>
<keyword id="KW-0539">Nucleus</keyword>
<keyword id="KW-0597">Phosphoprotein</keyword>
<keyword id="KW-1185">Reference proteome</keyword>
<keyword id="KW-0678">Repressor</keyword>
<keyword id="KW-0810">Translation regulation</keyword>
<protein>
    <recommendedName>
        <fullName>Neuroguidin</fullName>
    </recommendedName>
    <alternativeName>
        <fullName>EIF4E-binding protein</fullName>
    </alternativeName>
</protein>
<dbReference type="EMBL" id="AK005098">
    <property type="protein sequence ID" value="BAB23816.1"/>
    <property type="molecule type" value="mRNA"/>
</dbReference>
<dbReference type="EMBL" id="BC023770">
    <property type="protein sequence ID" value="AAH23770.1"/>
    <property type="status" value="ALT_INIT"/>
    <property type="molecule type" value="mRNA"/>
</dbReference>
<dbReference type="EMBL" id="BC052790">
    <property type="protein sequence ID" value="AAH52790.1"/>
    <property type="molecule type" value="mRNA"/>
</dbReference>
<dbReference type="CCDS" id="CCDS36928.1"/>
<dbReference type="RefSeq" id="NP_081166.1">
    <property type="nucleotide sequence ID" value="NM_026890.2"/>
</dbReference>
<dbReference type="SMR" id="Q9DB96"/>
<dbReference type="BioGRID" id="213145">
    <property type="interactions" value="2"/>
</dbReference>
<dbReference type="FunCoup" id="Q9DB96">
    <property type="interactions" value="3530"/>
</dbReference>
<dbReference type="STRING" id="10090.ENSMUSP00000022815"/>
<dbReference type="iPTMnet" id="Q9DB96"/>
<dbReference type="PhosphoSitePlus" id="Q9DB96"/>
<dbReference type="PaxDb" id="10090-ENSMUSP00000022815"/>
<dbReference type="PeptideAtlas" id="Q9DB96"/>
<dbReference type="ProteomicsDB" id="252960"/>
<dbReference type="Pumba" id="Q9DB96"/>
<dbReference type="Antibodypedia" id="89">
    <property type="antibodies" value="170 antibodies from 26 providers"/>
</dbReference>
<dbReference type="Ensembl" id="ENSMUST00000022815.10">
    <property type="protein sequence ID" value="ENSMUSP00000022815.9"/>
    <property type="gene ID" value="ENSMUSG00000022204.10"/>
</dbReference>
<dbReference type="GeneID" id="68966"/>
<dbReference type="KEGG" id="mmu:68966"/>
<dbReference type="UCSC" id="uc007txx.2">
    <property type="organism name" value="mouse"/>
</dbReference>
<dbReference type="AGR" id="MGI:1916216"/>
<dbReference type="CTD" id="25983"/>
<dbReference type="MGI" id="MGI:1916216">
    <property type="gene designation" value="Ngdn"/>
</dbReference>
<dbReference type="VEuPathDB" id="HostDB:ENSMUSG00000022204"/>
<dbReference type="eggNOG" id="KOG3117">
    <property type="taxonomic scope" value="Eukaryota"/>
</dbReference>
<dbReference type="GeneTree" id="ENSGT00500000044922"/>
<dbReference type="HOGENOM" id="CLU_031901_0_0_1"/>
<dbReference type="InParanoid" id="Q9DB96"/>
<dbReference type="OMA" id="PVHYNET"/>
<dbReference type="OrthoDB" id="203440at2759"/>
<dbReference type="PhylomeDB" id="Q9DB96"/>
<dbReference type="TreeFam" id="TF313713"/>
<dbReference type="BioGRID-ORCS" id="68966">
    <property type="hits" value="26 hits in 80 CRISPR screens"/>
</dbReference>
<dbReference type="ChiTaRS" id="Ngdn">
    <property type="organism name" value="mouse"/>
</dbReference>
<dbReference type="PRO" id="PR:Q9DB96"/>
<dbReference type="Proteomes" id="UP000000589">
    <property type="component" value="Chromosome 14"/>
</dbReference>
<dbReference type="RNAct" id="Q9DB96">
    <property type="molecule type" value="protein"/>
</dbReference>
<dbReference type="Bgee" id="ENSMUSG00000022204">
    <property type="expression patterns" value="Expressed in paneth cell and 263 other cell types or tissues"/>
</dbReference>
<dbReference type="GO" id="GO:0030424">
    <property type="term" value="C:axon"/>
    <property type="evidence" value="ECO:0007669"/>
    <property type="project" value="UniProtKB-SubCell"/>
</dbReference>
<dbReference type="GO" id="GO:0000775">
    <property type="term" value="C:chromosome, centromeric region"/>
    <property type="evidence" value="ECO:0007669"/>
    <property type="project" value="UniProtKB-SubCell"/>
</dbReference>
<dbReference type="GO" id="GO:0030425">
    <property type="term" value="C:dendrite"/>
    <property type="evidence" value="ECO:0007669"/>
    <property type="project" value="UniProtKB-SubCell"/>
</dbReference>
<dbReference type="GO" id="GO:0030175">
    <property type="term" value="C:filopodium"/>
    <property type="evidence" value="ECO:0007669"/>
    <property type="project" value="UniProtKB-SubCell"/>
</dbReference>
<dbReference type="GO" id="GO:0005739">
    <property type="term" value="C:mitochondrion"/>
    <property type="evidence" value="ECO:0007669"/>
    <property type="project" value="Ensembl"/>
</dbReference>
<dbReference type="GO" id="GO:0005730">
    <property type="term" value="C:nucleolus"/>
    <property type="evidence" value="ECO:0007669"/>
    <property type="project" value="UniProtKB-SubCell"/>
</dbReference>
<dbReference type="GO" id="GO:0005654">
    <property type="term" value="C:nucleoplasm"/>
    <property type="evidence" value="ECO:0007669"/>
    <property type="project" value="Ensembl"/>
</dbReference>
<dbReference type="GO" id="GO:0032040">
    <property type="term" value="C:small-subunit processome"/>
    <property type="evidence" value="ECO:0000250"/>
    <property type="project" value="UniProtKB"/>
</dbReference>
<dbReference type="GO" id="GO:0006417">
    <property type="term" value="P:regulation of translation"/>
    <property type="evidence" value="ECO:0007669"/>
    <property type="project" value="UniProtKB-KW"/>
</dbReference>
<dbReference type="GO" id="GO:0042274">
    <property type="term" value="P:ribosomal small subunit biogenesis"/>
    <property type="evidence" value="ECO:0000250"/>
    <property type="project" value="UniProtKB"/>
</dbReference>
<dbReference type="InterPro" id="IPR007146">
    <property type="entry name" value="Sas10/Utp3/C1D"/>
</dbReference>
<dbReference type="PANTHER" id="PTHR13237:SF9">
    <property type="entry name" value="NEUROGUIDIN"/>
    <property type="match status" value="1"/>
</dbReference>
<dbReference type="PANTHER" id="PTHR13237">
    <property type="entry name" value="SOMETHING ABOUT SILENCING PROTEIN 10-RELATED"/>
    <property type="match status" value="1"/>
</dbReference>
<dbReference type="Pfam" id="PF04000">
    <property type="entry name" value="Sas10_Utp3"/>
    <property type="match status" value="1"/>
</dbReference>
<feature type="initiator methionine" description="Removed" evidence="2">
    <location>
        <position position="1"/>
    </location>
</feature>
<feature type="chain" id="PRO_0000114332" description="Neuroguidin">
    <location>
        <begin position="2"/>
        <end position="315"/>
    </location>
</feature>
<feature type="region of interest" description="Necessary for interaction with EIF4E" evidence="5">
    <location>
        <begin position="41"/>
        <end position="174"/>
    </location>
</feature>
<feature type="region of interest" description="Disordered" evidence="4">
    <location>
        <begin position="123"/>
        <end position="190"/>
    </location>
</feature>
<feature type="region of interest" description="Disordered" evidence="4">
    <location>
        <begin position="212"/>
        <end position="243"/>
    </location>
</feature>
<feature type="region of interest" description="Disordered" evidence="4">
    <location>
        <begin position="284"/>
        <end position="315"/>
    </location>
</feature>
<feature type="coiled-coil region" evidence="3">
    <location>
        <begin position="7"/>
        <end position="41"/>
    </location>
</feature>
<feature type="coiled-coil region" evidence="3">
    <location>
        <begin position="181"/>
        <end position="203"/>
    </location>
</feature>
<feature type="compositionally biased region" description="Acidic residues" evidence="4">
    <location>
        <begin position="144"/>
        <end position="155"/>
    </location>
</feature>
<feature type="compositionally biased region" description="Basic and acidic residues" evidence="4">
    <location>
        <begin position="180"/>
        <end position="190"/>
    </location>
</feature>
<feature type="compositionally biased region" description="Basic and acidic residues" evidence="4">
    <location>
        <begin position="212"/>
        <end position="225"/>
    </location>
</feature>
<feature type="compositionally biased region" description="Basic and acidic residues" evidence="4">
    <location>
        <begin position="232"/>
        <end position="241"/>
    </location>
</feature>
<feature type="compositionally biased region" description="Basic residues" evidence="4">
    <location>
        <begin position="295"/>
        <end position="315"/>
    </location>
</feature>
<feature type="modified residue" description="N-acetylalanine" evidence="2">
    <location>
        <position position="2"/>
    </location>
</feature>
<feature type="modified residue" description="Phosphoserine" evidence="2">
    <location>
        <position position="121"/>
    </location>
</feature>
<feature type="modified residue" description="Phosphoserine" evidence="2">
    <location>
        <position position="142"/>
    </location>
</feature>
<feature type="modified residue" description="Phosphoserine" evidence="2">
    <location>
        <position position="143"/>
    </location>
</feature>
<feature type="modified residue" description="Phosphoserine" evidence="2">
    <location>
        <position position="204"/>
    </location>
</feature>
<feature type="modified residue" description="Phosphoserine" evidence="2">
    <location>
        <position position="214"/>
    </location>
</feature>
<feature type="sequence conflict" description="In Ref. 2; AAH23770." evidence="6" ref="2">
    <original>G</original>
    <variation>D</variation>
    <location>
        <position position="154"/>
    </location>
</feature>